<geneLocation type="mitochondrion"/>
<organism>
    <name type="scientific">Orcinus orca</name>
    <name type="common">Killer whale</name>
    <name type="synonym">Delphinus orca</name>
    <dbReference type="NCBI Taxonomy" id="9733"/>
    <lineage>
        <taxon>Eukaryota</taxon>
        <taxon>Metazoa</taxon>
        <taxon>Chordata</taxon>
        <taxon>Craniata</taxon>
        <taxon>Vertebrata</taxon>
        <taxon>Euteleostomi</taxon>
        <taxon>Mammalia</taxon>
        <taxon>Eutheria</taxon>
        <taxon>Laurasiatheria</taxon>
        <taxon>Artiodactyla</taxon>
        <taxon>Whippomorpha</taxon>
        <taxon>Cetacea</taxon>
        <taxon>Odontoceti</taxon>
        <taxon>Delphinidae</taxon>
        <taxon>Orcinus</taxon>
    </lineage>
</organism>
<protein>
    <recommendedName>
        <fullName>Cytochrome b</fullName>
    </recommendedName>
    <alternativeName>
        <fullName>Complex III subunit 3</fullName>
    </alternativeName>
    <alternativeName>
        <fullName>Complex III subunit III</fullName>
    </alternativeName>
    <alternativeName>
        <fullName>Cytochrome b-c1 complex subunit 3</fullName>
    </alternativeName>
    <alternativeName>
        <fullName>Ubiquinol-cytochrome-c reductase complex cytochrome b subunit</fullName>
    </alternativeName>
</protein>
<gene>
    <name type="primary">MT-CYB</name>
    <name type="synonym">COB</name>
    <name type="synonym">CYTB</name>
    <name type="synonym">MTCYB</name>
</gene>
<evidence type="ECO:0000250" key="1"/>
<evidence type="ECO:0000250" key="2">
    <source>
        <dbReference type="UniProtKB" id="P00157"/>
    </source>
</evidence>
<evidence type="ECO:0000255" key="3">
    <source>
        <dbReference type="PROSITE-ProRule" id="PRU00967"/>
    </source>
</evidence>
<evidence type="ECO:0000255" key="4">
    <source>
        <dbReference type="PROSITE-ProRule" id="PRU00968"/>
    </source>
</evidence>
<reference key="1">
    <citation type="journal article" date="1999" name="Mar. Mamm. Sci.">
        <title>Phylogenetic relationships among the delphinid cetaceans based on full cytochrome b sequences.</title>
        <authorList>
            <person name="LeDuc R.G."/>
            <person name="Perrin W.F."/>
            <person name="Dizon A.E."/>
        </authorList>
    </citation>
    <scope>NUCLEOTIDE SEQUENCE [GENOMIC DNA]</scope>
    <source>
        <strain>Isolate Pacific ocean</strain>
    </source>
</reference>
<proteinExistence type="inferred from homology"/>
<comment type="function">
    <text evidence="2">Component of the ubiquinol-cytochrome c reductase complex (complex III or cytochrome b-c1 complex) that is part of the mitochondrial respiratory chain. The b-c1 complex mediates electron transfer from ubiquinol to cytochrome c. Contributes to the generation of a proton gradient across the mitochondrial membrane that is then used for ATP synthesis.</text>
</comment>
<comment type="cofactor">
    <cofactor evidence="2">
        <name>heme b</name>
        <dbReference type="ChEBI" id="CHEBI:60344"/>
    </cofactor>
    <text evidence="2">Binds 2 heme b groups non-covalently.</text>
</comment>
<comment type="subunit">
    <text evidence="2">The cytochrome bc1 complex contains 11 subunits: 3 respiratory subunits (MT-CYB, CYC1 and UQCRFS1), 2 core proteins (UQCRC1 and UQCRC2) and 6 low-molecular weight proteins (UQCRH/QCR6, UQCRB/QCR7, UQCRQ/QCR8, UQCR10/QCR9, UQCR11/QCR10 and a cleavage product of UQCRFS1). This cytochrome bc1 complex then forms a dimer.</text>
</comment>
<comment type="subcellular location">
    <subcellularLocation>
        <location evidence="2">Mitochondrion inner membrane</location>
        <topology evidence="2">Multi-pass membrane protein</topology>
    </subcellularLocation>
</comment>
<comment type="miscellaneous">
    <text evidence="1">Heme 1 (or BL or b562) is low-potential and absorbs at about 562 nm, and heme 2 (or BH or b566) is high-potential and absorbs at about 566 nm.</text>
</comment>
<comment type="similarity">
    <text evidence="3 4">Belongs to the cytochrome b family.</text>
</comment>
<comment type="caution">
    <text evidence="2">The full-length protein contains only eight transmembrane helices, not nine as predicted by bioinformatics tools.</text>
</comment>
<sequence>MTNIRKTHPLMKILNNAFIDLPTPSNISSWWNFGSLLGLCLITQILTGLLLAMHYTPDTSTAFSSVAHICRDVNYGWFIRYLHANGASMFFICLYAHIGRSLYYGSYMFQETWNVGVLLLLAVMATAFVGYVLPWGQMSFWGATVITNLLSAIPYIGTTLVEWIWGGFSVDKATLTRFFAFHFILPFIITALAAVHLLFLHETGSNNPTGIPSNMDMIPFHPYHTIKDTLGALLLILTLLALTLFAPDLLGDPDNYTPANPLSTPAHIKPEWYFLFAYAILRSVPNKLGGVLALLLSILILIFIPMLQTSKQRSMMFRPFSQLLFWTLIADLLTLTWIGGQPVEHPYIIVGQLASILYFLLILVLMPTISLIENKLLKW</sequence>
<feature type="chain" id="PRO_0000061321" description="Cytochrome b">
    <location>
        <begin position="1"/>
        <end position="379"/>
    </location>
</feature>
<feature type="transmembrane region" description="Helical" evidence="2">
    <location>
        <begin position="33"/>
        <end position="53"/>
    </location>
</feature>
<feature type="transmembrane region" description="Helical" evidence="2">
    <location>
        <begin position="77"/>
        <end position="98"/>
    </location>
</feature>
<feature type="transmembrane region" description="Helical" evidence="2">
    <location>
        <begin position="113"/>
        <end position="133"/>
    </location>
</feature>
<feature type="transmembrane region" description="Helical" evidence="2">
    <location>
        <begin position="178"/>
        <end position="198"/>
    </location>
</feature>
<feature type="transmembrane region" description="Helical" evidence="2">
    <location>
        <begin position="226"/>
        <end position="246"/>
    </location>
</feature>
<feature type="transmembrane region" description="Helical" evidence="2">
    <location>
        <begin position="288"/>
        <end position="308"/>
    </location>
</feature>
<feature type="transmembrane region" description="Helical" evidence="2">
    <location>
        <begin position="320"/>
        <end position="340"/>
    </location>
</feature>
<feature type="transmembrane region" description="Helical" evidence="2">
    <location>
        <begin position="347"/>
        <end position="367"/>
    </location>
</feature>
<feature type="binding site" description="axial binding residue" evidence="2">
    <location>
        <position position="83"/>
    </location>
    <ligand>
        <name>heme b</name>
        <dbReference type="ChEBI" id="CHEBI:60344"/>
        <label>b562</label>
    </ligand>
    <ligandPart>
        <name>Fe</name>
        <dbReference type="ChEBI" id="CHEBI:18248"/>
    </ligandPart>
</feature>
<feature type="binding site" description="axial binding residue" evidence="2">
    <location>
        <position position="97"/>
    </location>
    <ligand>
        <name>heme b</name>
        <dbReference type="ChEBI" id="CHEBI:60344"/>
        <label>b566</label>
    </ligand>
    <ligandPart>
        <name>Fe</name>
        <dbReference type="ChEBI" id="CHEBI:18248"/>
    </ligandPart>
</feature>
<feature type="binding site" description="axial binding residue" evidence="2">
    <location>
        <position position="182"/>
    </location>
    <ligand>
        <name>heme b</name>
        <dbReference type="ChEBI" id="CHEBI:60344"/>
        <label>b562</label>
    </ligand>
    <ligandPart>
        <name>Fe</name>
        <dbReference type="ChEBI" id="CHEBI:18248"/>
    </ligandPart>
</feature>
<feature type="binding site" description="axial binding residue" evidence="2">
    <location>
        <position position="196"/>
    </location>
    <ligand>
        <name>heme b</name>
        <dbReference type="ChEBI" id="CHEBI:60344"/>
        <label>b566</label>
    </ligand>
    <ligandPart>
        <name>Fe</name>
        <dbReference type="ChEBI" id="CHEBI:18248"/>
    </ligandPart>
</feature>
<feature type="binding site" evidence="2">
    <location>
        <position position="201"/>
    </location>
    <ligand>
        <name>a ubiquinone</name>
        <dbReference type="ChEBI" id="CHEBI:16389"/>
    </ligand>
</feature>
<feature type="sequence variant" description="In strain: Isolate Pacific ocean.">
    <original>A</original>
    <variation>T</variation>
    <location>
        <position position="193"/>
    </location>
</feature>
<keyword id="KW-0249">Electron transport</keyword>
<keyword id="KW-0349">Heme</keyword>
<keyword id="KW-0408">Iron</keyword>
<keyword id="KW-0472">Membrane</keyword>
<keyword id="KW-0479">Metal-binding</keyword>
<keyword id="KW-0496">Mitochondrion</keyword>
<keyword id="KW-0999">Mitochondrion inner membrane</keyword>
<keyword id="KW-0679">Respiratory chain</keyword>
<keyword id="KW-0812">Transmembrane</keyword>
<keyword id="KW-1133">Transmembrane helix</keyword>
<keyword id="KW-0813">Transport</keyword>
<keyword id="KW-0830">Ubiquinone</keyword>
<dbReference type="EMBL" id="AF084060">
    <property type="protein sequence ID" value="AAD54437.1"/>
    <property type="molecule type" value="Genomic_DNA"/>
</dbReference>
<dbReference type="EMBL" id="AF084061">
    <property type="protein sequence ID" value="AAD54438.1"/>
    <property type="molecule type" value="Genomic_DNA"/>
</dbReference>
<dbReference type="SMR" id="Q9TDM5"/>
<dbReference type="GO" id="GO:0005743">
    <property type="term" value="C:mitochondrial inner membrane"/>
    <property type="evidence" value="ECO:0007669"/>
    <property type="project" value="UniProtKB-SubCell"/>
</dbReference>
<dbReference type="GO" id="GO:0045275">
    <property type="term" value="C:respiratory chain complex III"/>
    <property type="evidence" value="ECO:0007669"/>
    <property type="project" value="InterPro"/>
</dbReference>
<dbReference type="GO" id="GO:0046872">
    <property type="term" value="F:metal ion binding"/>
    <property type="evidence" value="ECO:0007669"/>
    <property type="project" value="UniProtKB-KW"/>
</dbReference>
<dbReference type="GO" id="GO:0008121">
    <property type="term" value="F:ubiquinol-cytochrome-c reductase activity"/>
    <property type="evidence" value="ECO:0007669"/>
    <property type="project" value="InterPro"/>
</dbReference>
<dbReference type="GO" id="GO:0006122">
    <property type="term" value="P:mitochondrial electron transport, ubiquinol to cytochrome c"/>
    <property type="evidence" value="ECO:0007669"/>
    <property type="project" value="TreeGrafter"/>
</dbReference>
<dbReference type="CDD" id="cd00290">
    <property type="entry name" value="cytochrome_b_C"/>
    <property type="match status" value="1"/>
</dbReference>
<dbReference type="CDD" id="cd00284">
    <property type="entry name" value="Cytochrome_b_N"/>
    <property type="match status" value="1"/>
</dbReference>
<dbReference type="FunFam" id="1.20.810.10:FF:000002">
    <property type="entry name" value="Cytochrome b"/>
    <property type="match status" value="1"/>
</dbReference>
<dbReference type="Gene3D" id="1.20.810.10">
    <property type="entry name" value="Cytochrome Bc1 Complex, Chain C"/>
    <property type="match status" value="1"/>
</dbReference>
<dbReference type="InterPro" id="IPR005798">
    <property type="entry name" value="Cyt_b/b6_C"/>
</dbReference>
<dbReference type="InterPro" id="IPR036150">
    <property type="entry name" value="Cyt_b/b6_C_sf"/>
</dbReference>
<dbReference type="InterPro" id="IPR005797">
    <property type="entry name" value="Cyt_b/b6_N"/>
</dbReference>
<dbReference type="InterPro" id="IPR027387">
    <property type="entry name" value="Cytb/b6-like_sf"/>
</dbReference>
<dbReference type="InterPro" id="IPR030689">
    <property type="entry name" value="Cytochrome_b"/>
</dbReference>
<dbReference type="InterPro" id="IPR048260">
    <property type="entry name" value="Cytochrome_b_C_euk/bac"/>
</dbReference>
<dbReference type="InterPro" id="IPR048259">
    <property type="entry name" value="Cytochrome_b_N_euk/bac"/>
</dbReference>
<dbReference type="InterPro" id="IPR016174">
    <property type="entry name" value="Di-haem_cyt_TM"/>
</dbReference>
<dbReference type="PANTHER" id="PTHR19271">
    <property type="entry name" value="CYTOCHROME B"/>
    <property type="match status" value="1"/>
</dbReference>
<dbReference type="PANTHER" id="PTHR19271:SF16">
    <property type="entry name" value="CYTOCHROME B"/>
    <property type="match status" value="1"/>
</dbReference>
<dbReference type="Pfam" id="PF00032">
    <property type="entry name" value="Cytochrom_B_C"/>
    <property type="match status" value="1"/>
</dbReference>
<dbReference type="Pfam" id="PF00033">
    <property type="entry name" value="Cytochrome_B"/>
    <property type="match status" value="1"/>
</dbReference>
<dbReference type="PIRSF" id="PIRSF038885">
    <property type="entry name" value="COB"/>
    <property type="match status" value="1"/>
</dbReference>
<dbReference type="SUPFAM" id="SSF81648">
    <property type="entry name" value="a domain/subunit of cytochrome bc1 complex (Ubiquinol-cytochrome c reductase)"/>
    <property type="match status" value="1"/>
</dbReference>
<dbReference type="SUPFAM" id="SSF81342">
    <property type="entry name" value="Transmembrane di-heme cytochromes"/>
    <property type="match status" value="1"/>
</dbReference>
<dbReference type="PROSITE" id="PS51003">
    <property type="entry name" value="CYTB_CTER"/>
    <property type="match status" value="1"/>
</dbReference>
<dbReference type="PROSITE" id="PS51002">
    <property type="entry name" value="CYTB_NTER"/>
    <property type="match status" value="1"/>
</dbReference>
<name>CYB_ORCOR</name>
<accession>Q9TDM5</accession>
<accession>Q9TDM4</accession>